<dbReference type="EMBL" id="AB037857">
    <property type="protein sequence ID" value="BAA92674.1"/>
    <property type="status" value="ALT_INIT"/>
    <property type="molecule type" value="mRNA"/>
</dbReference>
<dbReference type="EMBL" id="AK074637">
    <property type="protein sequence ID" value="BAC11104.1"/>
    <property type="status" value="ALT_SEQ"/>
    <property type="molecule type" value="mRNA"/>
</dbReference>
<dbReference type="EMBL" id="AL445231">
    <property type="status" value="NOT_ANNOTATED_CDS"/>
    <property type="molecule type" value="Genomic_DNA"/>
</dbReference>
<dbReference type="EMBL" id="AL157904">
    <property type="status" value="NOT_ANNOTATED_CDS"/>
    <property type="molecule type" value="Genomic_DNA"/>
</dbReference>
<dbReference type="EMBL" id="BC152454">
    <property type="protein sequence ID" value="AAI52455.1"/>
    <property type="molecule type" value="mRNA"/>
</dbReference>
<dbReference type="CCDS" id="CCDS890.1"/>
<dbReference type="RefSeq" id="NP_065173.2">
    <property type="nucleotide sequence ID" value="NM_020440.3"/>
</dbReference>
<dbReference type="EMDB" id="EMD-11053"/>
<dbReference type="BioGRID" id="111710">
    <property type="interactions" value="71"/>
</dbReference>
<dbReference type="FunCoup" id="Q9P2B2">
    <property type="interactions" value="491"/>
</dbReference>
<dbReference type="IntAct" id="Q9P2B2">
    <property type="interactions" value="36"/>
</dbReference>
<dbReference type="MINT" id="Q9P2B2"/>
<dbReference type="STRING" id="9606.ENSP00000376899"/>
<dbReference type="GlyConnect" id="1647">
    <property type="glycosylation" value="35 N-Linked glycans (5 sites)"/>
</dbReference>
<dbReference type="GlyCosmos" id="Q9P2B2">
    <property type="glycosylation" value="9 sites, 35 glycans"/>
</dbReference>
<dbReference type="GlyGen" id="Q9P2B2">
    <property type="glycosylation" value="15 sites, 79 N-linked glycans (7 sites), 2 O-linked glycans (5 sites)"/>
</dbReference>
<dbReference type="iPTMnet" id="Q9P2B2"/>
<dbReference type="PhosphoSitePlus" id="Q9P2B2"/>
<dbReference type="SwissPalm" id="Q9P2B2"/>
<dbReference type="BioMuta" id="PTGFRN"/>
<dbReference type="DMDM" id="28201801"/>
<dbReference type="jPOST" id="Q9P2B2"/>
<dbReference type="MassIVE" id="Q9P2B2"/>
<dbReference type="PaxDb" id="9606-ENSP00000376899"/>
<dbReference type="PeptideAtlas" id="Q9P2B2"/>
<dbReference type="ProteomicsDB" id="83765"/>
<dbReference type="Pumba" id="Q9P2B2"/>
<dbReference type="Antibodypedia" id="2447">
    <property type="antibodies" value="149 antibodies from 27 providers"/>
</dbReference>
<dbReference type="DNASU" id="5738"/>
<dbReference type="Ensembl" id="ENST00000393203.3">
    <property type="protein sequence ID" value="ENSP00000376899.2"/>
    <property type="gene ID" value="ENSG00000134247.10"/>
</dbReference>
<dbReference type="GeneID" id="5738"/>
<dbReference type="KEGG" id="hsa:5738"/>
<dbReference type="MANE-Select" id="ENST00000393203.3">
    <property type="protein sequence ID" value="ENSP00000376899.2"/>
    <property type="RefSeq nucleotide sequence ID" value="NM_020440.4"/>
    <property type="RefSeq protein sequence ID" value="NP_065173.2"/>
</dbReference>
<dbReference type="UCSC" id="uc001egv.2">
    <property type="organism name" value="human"/>
</dbReference>
<dbReference type="AGR" id="HGNC:9601"/>
<dbReference type="CTD" id="5738"/>
<dbReference type="DisGeNET" id="5738"/>
<dbReference type="GeneCards" id="PTGFRN"/>
<dbReference type="HGNC" id="HGNC:9601">
    <property type="gene designation" value="PTGFRN"/>
</dbReference>
<dbReference type="HPA" id="ENSG00000134247">
    <property type="expression patterns" value="Low tissue specificity"/>
</dbReference>
<dbReference type="MIM" id="601204">
    <property type="type" value="gene"/>
</dbReference>
<dbReference type="neXtProt" id="NX_Q9P2B2"/>
<dbReference type="OpenTargets" id="ENSG00000134247"/>
<dbReference type="PharmGKB" id="PA33950"/>
<dbReference type="VEuPathDB" id="HostDB:ENSG00000134247"/>
<dbReference type="eggNOG" id="ENOG502QVD2">
    <property type="taxonomic scope" value="Eukaryota"/>
</dbReference>
<dbReference type="GeneTree" id="ENSGT00940000158367"/>
<dbReference type="HOGENOM" id="CLU_005187_1_0_1"/>
<dbReference type="InParanoid" id="Q9P2B2"/>
<dbReference type="OMA" id="MPVSILW"/>
<dbReference type="OrthoDB" id="9873136at2759"/>
<dbReference type="PAN-GO" id="Q9P2B2">
    <property type="GO annotations" value="1 GO annotation based on evolutionary models"/>
</dbReference>
<dbReference type="PhylomeDB" id="Q9P2B2"/>
<dbReference type="TreeFam" id="TF332702"/>
<dbReference type="PathwayCommons" id="Q9P2B2"/>
<dbReference type="SignaLink" id="Q9P2B2"/>
<dbReference type="BioGRID-ORCS" id="5738">
    <property type="hits" value="11 hits in 1160 CRISPR screens"/>
</dbReference>
<dbReference type="ChiTaRS" id="PTGFRN">
    <property type="organism name" value="human"/>
</dbReference>
<dbReference type="GeneWiki" id="PTGFRN"/>
<dbReference type="GenomeRNAi" id="5738"/>
<dbReference type="Pharos" id="Q9P2B2">
    <property type="development level" value="Tbio"/>
</dbReference>
<dbReference type="PRO" id="PR:Q9P2B2"/>
<dbReference type="Proteomes" id="UP000005640">
    <property type="component" value="Chromosome 1"/>
</dbReference>
<dbReference type="RNAct" id="Q9P2B2">
    <property type="molecule type" value="protein"/>
</dbReference>
<dbReference type="Bgee" id="ENSG00000134247">
    <property type="expression patterns" value="Expressed in cardiac muscle of right atrium and 164 other cell types or tissues"/>
</dbReference>
<dbReference type="GO" id="GO:0009986">
    <property type="term" value="C:cell surface"/>
    <property type="evidence" value="ECO:0007005"/>
    <property type="project" value="UniProtKB"/>
</dbReference>
<dbReference type="GO" id="GO:0005789">
    <property type="term" value="C:endoplasmic reticulum membrane"/>
    <property type="evidence" value="ECO:0007669"/>
    <property type="project" value="UniProtKB-SubCell"/>
</dbReference>
<dbReference type="GO" id="GO:0005794">
    <property type="term" value="C:Golgi apparatus"/>
    <property type="evidence" value="ECO:0007669"/>
    <property type="project" value="UniProtKB-SubCell"/>
</dbReference>
<dbReference type="GO" id="GO:0016020">
    <property type="term" value="C:membrane"/>
    <property type="evidence" value="ECO:0000318"/>
    <property type="project" value="GO_Central"/>
</dbReference>
<dbReference type="GO" id="GO:0034389">
    <property type="term" value="P:lipid droplet organization"/>
    <property type="evidence" value="ECO:0007669"/>
    <property type="project" value="Ensembl"/>
</dbReference>
<dbReference type="GO" id="GO:0014905">
    <property type="term" value="P:myoblast fusion involved in skeletal muscle regeneration"/>
    <property type="evidence" value="ECO:0000250"/>
    <property type="project" value="UniProtKB"/>
</dbReference>
<dbReference type="FunFam" id="2.60.40.10:FF:000191">
    <property type="entry name" value="Immunoglobulin superfamily member 3"/>
    <property type="match status" value="1"/>
</dbReference>
<dbReference type="FunFam" id="2.60.40.10:FF:001070">
    <property type="entry name" value="Prostaglandin F2 receptor inhibitor"/>
    <property type="match status" value="1"/>
</dbReference>
<dbReference type="FunFam" id="2.60.40.10:FF:002026">
    <property type="entry name" value="Prostaglandin F2 receptor inhibitor"/>
    <property type="match status" value="1"/>
</dbReference>
<dbReference type="FunFam" id="2.60.40.10:FF:000854">
    <property type="entry name" value="Prostaglandin F2 receptor negative regulator"/>
    <property type="match status" value="1"/>
</dbReference>
<dbReference type="FunFam" id="2.60.40.10:FF:000995">
    <property type="entry name" value="prostaglandin F2 receptor negative regulator"/>
    <property type="match status" value="1"/>
</dbReference>
<dbReference type="Gene3D" id="2.60.40.10">
    <property type="entry name" value="Immunoglobulins"/>
    <property type="match status" value="4"/>
</dbReference>
<dbReference type="InterPro" id="IPR007110">
    <property type="entry name" value="Ig-like_dom"/>
</dbReference>
<dbReference type="InterPro" id="IPR036179">
    <property type="entry name" value="Ig-like_dom_sf"/>
</dbReference>
<dbReference type="InterPro" id="IPR013783">
    <property type="entry name" value="Ig-like_fold"/>
</dbReference>
<dbReference type="InterPro" id="IPR003599">
    <property type="entry name" value="Ig_sub"/>
</dbReference>
<dbReference type="InterPro" id="IPR013106">
    <property type="entry name" value="Ig_V-set"/>
</dbReference>
<dbReference type="InterPro" id="IPR051102">
    <property type="entry name" value="IgSF_V-set/TM_domain"/>
</dbReference>
<dbReference type="PANTHER" id="PTHR12207:SF3">
    <property type="entry name" value="PROSTAGLANDIN F2 RECEPTOR NEGATIVE REGULATOR"/>
    <property type="match status" value="1"/>
</dbReference>
<dbReference type="PANTHER" id="PTHR12207">
    <property type="entry name" value="V-SET AND TRANSMEMBRANE DOMAIN-CONTAINING PROTEIN"/>
    <property type="match status" value="1"/>
</dbReference>
<dbReference type="Pfam" id="PF07686">
    <property type="entry name" value="V-set"/>
    <property type="match status" value="2"/>
</dbReference>
<dbReference type="SMART" id="SM00409">
    <property type="entry name" value="IG"/>
    <property type="match status" value="6"/>
</dbReference>
<dbReference type="SMART" id="SM00406">
    <property type="entry name" value="IGv"/>
    <property type="match status" value="3"/>
</dbReference>
<dbReference type="SUPFAM" id="SSF48726">
    <property type="entry name" value="Immunoglobulin"/>
    <property type="match status" value="4"/>
</dbReference>
<dbReference type="PROSITE" id="PS50835">
    <property type="entry name" value="IG_LIKE"/>
    <property type="match status" value="5"/>
</dbReference>
<gene>
    <name type="primary">PTGFRN</name>
    <name type="synonym">CD9P1</name>
    <name type="synonym">EWIF</name>
    <name type="synonym">FPRP</name>
    <name type="synonym">KIAA1436</name>
</gene>
<evidence type="ECO:0000250" key="1"/>
<evidence type="ECO:0000250" key="2">
    <source>
        <dbReference type="UniProtKB" id="Q62786"/>
    </source>
</evidence>
<evidence type="ECO:0000250" key="3">
    <source>
        <dbReference type="UniProtKB" id="Q9WV91"/>
    </source>
</evidence>
<evidence type="ECO:0000255" key="4"/>
<evidence type="ECO:0000255" key="5">
    <source>
        <dbReference type="PROSITE-ProRule" id="PRU00114"/>
    </source>
</evidence>
<evidence type="ECO:0000269" key="6">
    <source>
    </source>
</evidence>
<evidence type="ECO:0000269" key="7">
    <source>
    </source>
</evidence>
<evidence type="ECO:0000269" key="8">
    <source>
    </source>
</evidence>
<evidence type="ECO:0000269" key="9">
    <source>
    </source>
</evidence>
<evidence type="ECO:0000305" key="10"/>
<name>FPRP_HUMAN</name>
<sequence>MGRLASRPLLLALLSLALCRGRVVRVPTATLVRVVGTELVIPCNVSDYDGPSEQNFDWSFSSLGSSFVELASTWEVGFPAQLYQERLQRGEILLRRTANDAVELHIKNVQPSDQGHYKCSTPSTDATVQGNYEDTVQVKVLADSLHVGPSARPPPSLSLREGEPFELRCTAASASPLHTHLALLWEVHRGPARRSVLALTHEGRFHPGLGYEQRYHSGDVRLDTVGSDAYRLSVSRALSADQGSYRCIVSEWIAEQGNWQEIQEKAVEVATVVIQPSVLRAAVPKNVSVAEGKELDLTCNITTDRADDVRPEVTWSFSRMPDSTLPGSRVLARLDRDSLVHSSPHVALSHVDARSYHLLVRDVSKENSGYYYCHVSLWAPGHNRSWHKVAEAVSSPAGVGVTWLEPDYQVYLNASKVPGFADDPTELACRVVDTKSGEANVRFTVSWYYRMNRRSDNVVTSELLAVMDGDWTLKYGERSKQRAQDGDFIFSKEHTDTFNFRIQRTTEEDRGNYYCVVSAWTKQRNNSWVKSKDVFSKPVNIFWALEDSVLVVKARQPKPFFAAGNTFEMTCKVSSKNIKSPRYSVLIMAEKPVGDLSSPNETKYIISLDQDSVVKLENWTDASRVDGVVLEKVQEDEFRYRMYQTQVSDAGLYRCMVTAWSPVRGSLWREAATSLSNPIEIDFQTSGPIFNASVHSDTPSVIRGDLIKLFCIITVEGAALDPDDMAFDVSWFAVHSFGLDKAPVLLSSLDRKGIVTTSRRDWKSDLSLERVSVLEFLLQVHGSEDQDFGNYYCSVTPWVKSPTGSWQKEAEIHSKPVFITVKMDVLNAFKYPLLIGVGLSTVIGLLSCLIGYCSSHWCCKKEVQETRRERRRLMSMEMD</sequence>
<accession>Q9P2B2</accession>
<accession>Q5VVU9</accession>
<accession>Q8N2K6</accession>
<proteinExistence type="evidence at protein level"/>
<comment type="function">
    <text evidence="1 3">Inhibits the binding of prostaglandin F2-alpha (PGF2-alpha) to its specific FP receptor, by decreasing the receptor number rather than the affinity constant. Functional coupling with the prostaglandin F2-alpha receptor seems to occur (By similarity). In myoblasts, associates with tetraspanins CD9 and CD81 to prevent myotube fusion during muscle regeneration (By similarity).</text>
</comment>
<comment type="subunit">
    <text evidence="3 6">Interacts with CD9 and CD81 (PubMed:11278880). Part of a complex composed of CD9, CD81 and IGSF8 (By similarity). Also seems to interact with CD63, CD82 and CD151 (PubMed:11278880).</text>
</comment>
<comment type="interaction">
    <interactant intactId="EBI-4290465">
        <id>Q9P2B2</id>
    </interactant>
    <interactant intactId="EBI-4280101">
        <id>P21926</id>
        <label>CD9</label>
    </interactant>
    <organismsDiffer>false</organismsDiffer>
    <experiments>11</experiments>
</comment>
<comment type="subcellular location">
    <subcellularLocation>
        <location evidence="1">Endoplasmic reticulum membrane</location>
        <topology evidence="1">Single-pass type I membrane protein</topology>
    </subcellularLocation>
    <subcellularLocation>
        <location evidence="1">Golgi apparatus</location>
        <location evidence="1">trans-Golgi network membrane</location>
        <topology evidence="1">Single-pass type I membrane protein</topology>
    </subcellularLocation>
</comment>
<comment type="sequence caution" evidence="10">
    <conflict type="erroneous initiation">
        <sequence resource="EMBL-CDS" id="BAA92674"/>
    </conflict>
</comment>
<comment type="sequence caution" evidence="10">
    <conflict type="erroneous termination">
        <sequence resource="EMBL-CDS" id="BAC11104"/>
    </conflict>
    <text>Truncated C-terminus.</text>
</comment>
<organism>
    <name type="scientific">Homo sapiens</name>
    <name type="common">Human</name>
    <dbReference type="NCBI Taxonomy" id="9606"/>
    <lineage>
        <taxon>Eukaryota</taxon>
        <taxon>Metazoa</taxon>
        <taxon>Chordata</taxon>
        <taxon>Craniata</taxon>
        <taxon>Vertebrata</taxon>
        <taxon>Euteleostomi</taxon>
        <taxon>Mammalia</taxon>
        <taxon>Eutheria</taxon>
        <taxon>Euarchontoglires</taxon>
        <taxon>Primates</taxon>
        <taxon>Haplorrhini</taxon>
        <taxon>Catarrhini</taxon>
        <taxon>Hominidae</taxon>
        <taxon>Homo</taxon>
    </lineage>
</organism>
<reference key="1">
    <citation type="journal article" date="2000" name="DNA Res.">
        <title>Prediction of the coding sequences of unidentified human genes. XVI. The complete sequences of 150 new cDNA clones from brain which code for large proteins in vitro.</title>
        <authorList>
            <person name="Nagase T."/>
            <person name="Kikuno R."/>
            <person name="Ishikawa K."/>
            <person name="Hirosawa M."/>
            <person name="Ohara O."/>
        </authorList>
    </citation>
    <scope>NUCLEOTIDE SEQUENCE [LARGE SCALE MRNA]</scope>
    <source>
        <tissue>Brain</tissue>
    </source>
</reference>
<reference key="2">
    <citation type="journal article" date="2004" name="Nat. Genet.">
        <title>Complete sequencing and characterization of 21,243 full-length human cDNAs.</title>
        <authorList>
            <person name="Ota T."/>
            <person name="Suzuki Y."/>
            <person name="Nishikawa T."/>
            <person name="Otsuki T."/>
            <person name="Sugiyama T."/>
            <person name="Irie R."/>
            <person name="Wakamatsu A."/>
            <person name="Hayashi K."/>
            <person name="Sato H."/>
            <person name="Nagai K."/>
            <person name="Kimura K."/>
            <person name="Makita H."/>
            <person name="Sekine M."/>
            <person name="Obayashi M."/>
            <person name="Nishi T."/>
            <person name="Shibahara T."/>
            <person name="Tanaka T."/>
            <person name="Ishii S."/>
            <person name="Yamamoto J."/>
            <person name="Saito K."/>
            <person name="Kawai Y."/>
            <person name="Isono Y."/>
            <person name="Nakamura Y."/>
            <person name="Nagahari K."/>
            <person name="Murakami K."/>
            <person name="Yasuda T."/>
            <person name="Iwayanagi T."/>
            <person name="Wagatsuma M."/>
            <person name="Shiratori A."/>
            <person name="Sudo H."/>
            <person name="Hosoiri T."/>
            <person name="Kaku Y."/>
            <person name="Kodaira H."/>
            <person name="Kondo H."/>
            <person name="Sugawara M."/>
            <person name="Takahashi M."/>
            <person name="Kanda K."/>
            <person name="Yokoi T."/>
            <person name="Furuya T."/>
            <person name="Kikkawa E."/>
            <person name="Omura Y."/>
            <person name="Abe K."/>
            <person name="Kamihara K."/>
            <person name="Katsuta N."/>
            <person name="Sato K."/>
            <person name="Tanikawa M."/>
            <person name="Yamazaki M."/>
            <person name="Ninomiya K."/>
            <person name="Ishibashi T."/>
            <person name="Yamashita H."/>
            <person name="Murakawa K."/>
            <person name="Fujimori K."/>
            <person name="Tanai H."/>
            <person name="Kimata M."/>
            <person name="Watanabe M."/>
            <person name="Hiraoka S."/>
            <person name="Chiba Y."/>
            <person name="Ishida S."/>
            <person name="Ono Y."/>
            <person name="Takiguchi S."/>
            <person name="Watanabe S."/>
            <person name="Yosida M."/>
            <person name="Hotuta T."/>
            <person name="Kusano J."/>
            <person name="Kanehori K."/>
            <person name="Takahashi-Fujii A."/>
            <person name="Hara H."/>
            <person name="Tanase T.-O."/>
            <person name="Nomura Y."/>
            <person name="Togiya S."/>
            <person name="Komai F."/>
            <person name="Hara R."/>
            <person name="Takeuchi K."/>
            <person name="Arita M."/>
            <person name="Imose N."/>
            <person name="Musashino K."/>
            <person name="Yuuki H."/>
            <person name="Oshima A."/>
            <person name="Sasaki N."/>
            <person name="Aotsuka S."/>
            <person name="Yoshikawa Y."/>
            <person name="Matsunawa H."/>
            <person name="Ichihara T."/>
            <person name="Shiohata N."/>
            <person name="Sano S."/>
            <person name="Moriya S."/>
            <person name="Momiyama H."/>
            <person name="Satoh N."/>
            <person name="Takami S."/>
            <person name="Terashima Y."/>
            <person name="Suzuki O."/>
            <person name="Nakagawa S."/>
            <person name="Senoh A."/>
            <person name="Mizoguchi H."/>
            <person name="Goto Y."/>
            <person name="Shimizu F."/>
            <person name="Wakebe H."/>
            <person name="Hishigaki H."/>
            <person name="Watanabe T."/>
            <person name="Sugiyama A."/>
            <person name="Takemoto M."/>
            <person name="Kawakami B."/>
            <person name="Yamazaki M."/>
            <person name="Watanabe K."/>
            <person name="Kumagai A."/>
            <person name="Itakura S."/>
            <person name="Fukuzumi Y."/>
            <person name="Fujimori Y."/>
            <person name="Komiyama M."/>
            <person name="Tashiro H."/>
            <person name="Tanigami A."/>
            <person name="Fujiwara T."/>
            <person name="Ono T."/>
            <person name="Yamada K."/>
            <person name="Fujii Y."/>
            <person name="Ozaki K."/>
            <person name="Hirao M."/>
            <person name="Ohmori Y."/>
            <person name="Kawabata A."/>
            <person name="Hikiji T."/>
            <person name="Kobatake N."/>
            <person name="Inagaki H."/>
            <person name="Ikema Y."/>
            <person name="Okamoto S."/>
            <person name="Okitani R."/>
            <person name="Kawakami T."/>
            <person name="Noguchi S."/>
            <person name="Itoh T."/>
            <person name="Shigeta K."/>
            <person name="Senba T."/>
            <person name="Matsumura K."/>
            <person name="Nakajima Y."/>
            <person name="Mizuno T."/>
            <person name="Morinaga M."/>
            <person name="Sasaki M."/>
            <person name="Togashi T."/>
            <person name="Oyama M."/>
            <person name="Hata H."/>
            <person name="Watanabe M."/>
            <person name="Komatsu T."/>
            <person name="Mizushima-Sugano J."/>
            <person name="Satoh T."/>
            <person name="Shirai Y."/>
            <person name="Takahashi Y."/>
            <person name="Nakagawa K."/>
            <person name="Okumura K."/>
            <person name="Nagase T."/>
            <person name="Nomura N."/>
            <person name="Kikuchi H."/>
            <person name="Masuho Y."/>
            <person name="Yamashita R."/>
            <person name="Nakai K."/>
            <person name="Yada T."/>
            <person name="Nakamura Y."/>
            <person name="Ohara O."/>
            <person name="Isogai T."/>
            <person name="Sugano S."/>
        </authorList>
    </citation>
    <scope>NUCLEOTIDE SEQUENCE [LARGE SCALE MRNA]</scope>
    <scope>VARIANT THR-277</scope>
    <source>
        <tissue>Embryo</tissue>
    </source>
</reference>
<reference key="3">
    <citation type="journal article" date="2006" name="Nature">
        <title>The DNA sequence and biological annotation of human chromosome 1.</title>
        <authorList>
            <person name="Gregory S.G."/>
            <person name="Barlow K.F."/>
            <person name="McLay K.E."/>
            <person name="Kaul R."/>
            <person name="Swarbreck D."/>
            <person name="Dunham A."/>
            <person name="Scott C.E."/>
            <person name="Howe K.L."/>
            <person name="Woodfine K."/>
            <person name="Spencer C.C.A."/>
            <person name="Jones M.C."/>
            <person name="Gillson C."/>
            <person name="Searle S."/>
            <person name="Zhou Y."/>
            <person name="Kokocinski F."/>
            <person name="McDonald L."/>
            <person name="Evans R."/>
            <person name="Phillips K."/>
            <person name="Atkinson A."/>
            <person name="Cooper R."/>
            <person name="Jones C."/>
            <person name="Hall R.E."/>
            <person name="Andrews T.D."/>
            <person name="Lloyd C."/>
            <person name="Ainscough R."/>
            <person name="Almeida J.P."/>
            <person name="Ambrose K.D."/>
            <person name="Anderson F."/>
            <person name="Andrew R.W."/>
            <person name="Ashwell R.I.S."/>
            <person name="Aubin K."/>
            <person name="Babbage A.K."/>
            <person name="Bagguley C.L."/>
            <person name="Bailey J."/>
            <person name="Beasley H."/>
            <person name="Bethel G."/>
            <person name="Bird C.P."/>
            <person name="Bray-Allen S."/>
            <person name="Brown J.Y."/>
            <person name="Brown A.J."/>
            <person name="Buckley D."/>
            <person name="Burton J."/>
            <person name="Bye J."/>
            <person name="Carder C."/>
            <person name="Chapman J.C."/>
            <person name="Clark S.Y."/>
            <person name="Clarke G."/>
            <person name="Clee C."/>
            <person name="Cobley V."/>
            <person name="Collier R.E."/>
            <person name="Corby N."/>
            <person name="Coville G.J."/>
            <person name="Davies J."/>
            <person name="Deadman R."/>
            <person name="Dunn M."/>
            <person name="Earthrowl M."/>
            <person name="Ellington A.G."/>
            <person name="Errington H."/>
            <person name="Frankish A."/>
            <person name="Frankland J."/>
            <person name="French L."/>
            <person name="Garner P."/>
            <person name="Garnett J."/>
            <person name="Gay L."/>
            <person name="Ghori M.R.J."/>
            <person name="Gibson R."/>
            <person name="Gilby L.M."/>
            <person name="Gillett W."/>
            <person name="Glithero R.J."/>
            <person name="Grafham D.V."/>
            <person name="Griffiths C."/>
            <person name="Griffiths-Jones S."/>
            <person name="Grocock R."/>
            <person name="Hammond S."/>
            <person name="Harrison E.S.I."/>
            <person name="Hart E."/>
            <person name="Haugen E."/>
            <person name="Heath P.D."/>
            <person name="Holmes S."/>
            <person name="Holt K."/>
            <person name="Howden P.J."/>
            <person name="Hunt A.R."/>
            <person name="Hunt S.E."/>
            <person name="Hunter G."/>
            <person name="Isherwood J."/>
            <person name="James R."/>
            <person name="Johnson C."/>
            <person name="Johnson D."/>
            <person name="Joy A."/>
            <person name="Kay M."/>
            <person name="Kershaw J.K."/>
            <person name="Kibukawa M."/>
            <person name="Kimberley A.M."/>
            <person name="King A."/>
            <person name="Knights A.J."/>
            <person name="Lad H."/>
            <person name="Laird G."/>
            <person name="Lawlor S."/>
            <person name="Leongamornlert D.A."/>
            <person name="Lloyd D.M."/>
            <person name="Loveland J."/>
            <person name="Lovell J."/>
            <person name="Lush M.J."/>
            <person name="Lyne R."/>
            <person name="Martin S."/>
            <person name="Mashreghi-Mohammadi M."/>
            <person name="Matthews L."/>
            <person name="Matthews N.S.W."/>
            <person name="McLaren S."/>
            <person name="Milne S."/>
            <person name="Mistry S."/>
            <person name="Moore M.J.F."/>
            <person name="Nickerson T."/>
            <person name="O'Dell C.N."/>
            <person name="Oliver K."/>
            <person name="Palmeiri A."/>
            <person name="Palmer S.A."/>
            <person name="Parker A."/>
            <person name="Patel D."/>
            <person name="Pearce A.V."/>
            <person name="Peck A.I."/>
            <person name="Pelan S."/>
            <person name="Phelps K."/>
            <person name="Phillimore B.J."/>
            <person name="Plumb R."/>
            <person name="Rajan J."/>
            <person name="Raymond C."/>
            <person name="Rouse G."/>
            <person name="Saenphimmachak C."/>
            <person name="Sehra H.K."/>
            <person name="Sheridan E."/>
            <person name="Shownkeen R."/>
            <person name="Sims S."/>
            <person name="Skuce C.D."/>
            <person name="Smith M."/>
            <person name="Steward C."/>
            <person name="Subramanian S."/>
            <person name="Sycamore N."/>
            <person name="Tracey A."/>
            <person name="Tromans A."/>
            <person name="Van Helmond Z."/>
            <person name="Wall M."/>
            <person name="Wallis J.M."/>
            <person name="White S."/>
            <person name="Whitehead S.L."/>
            <person name="Wilkinson J.E."/>
            <person name="Willey D.L."/>
            <person name="Williams H."/>
            <person name="Wilming L."/>
            <person name="Wray P.W."/>
            <person name="Wu Z."/>
            <person name="Coulson A."/>
            <person name="Vaudin M."/>
            <person name="Sulston J.E."/>
            <person name="Durbin R.M."/>
            <person name="Hubbard T."/>
            <person name="Wooster R."/>
            <person name="Dunham I."/>
            <person name="Carter N.P."/>
            <person name="McVean G."/>
            <person name="Ross M.T."/>
            <person name="Harrow J."/>
            <person name="Olson M.V."/>
            <person name="Beck S."/>
            <person name="Rogers J."/>
            <person name="Bentley D.R."/>
        </authorList>
    </citation>
    <scope>NUCLEOTIDE SEQUENCE [LARGE SCALE GENOMIC DNA]</scope>
</reference>
<reference key="4">
    <citation type="journal article" date="2004" name="Genome Res.">
        <title>The status, quality, and expansion of the NIH full-length cDNA project: the Mammalian Gene Collection (MGC).</title>
        <authorList>
            <consortium name="The MGC Project Team"/>
        </authorList>
    </citation>
    <scope>NUCLEOTIDE SEQUENCE [LARGE SCALE MRNA]</scope>
</reference>
<reference key="5">
    <citation type="journal article" date="2001" name="J. Biol. Chem.">
        <title>The major CD9 and CD81 molecular partner. Identification and characterization of the complexes.</title>
        <authorList>
            <person name="Charrin S."/>
            <person name="Le Naour F."/>
            <person name="Oualid M."/>
            <person name="Billard M."/>
            <person name="Faure G."/>
            <person name="Hanash S.M."/>
            <person name="Boucheix C."/>
            <person name="Rubinstein E."/>
        </authorList>
    </citation>
    <scope>PARTIAL PROTEIN SEQUENCE</scope>
    <scope>INTERACTION WITH CD9; CD63; CD81; CD82 AND CD151</scope>
</reference>
<reference key="6">
    <citation type="journal article" date="2007" name="Proteomics">
        <title>Glycosylation status of the membrane protein CD9P-1.</title>
        <authorList>
            <person name="Andre M."/>
            <person name="Morelle W."/>
            <person name="Planchon S."/>
            <person name="Milhiet P.E."/>
            <person name="Rubinstein E."/>
            <person name="Mollicone R."/>
            <person name="Chamot-Rooke J."/>
            <person name="Le Naour F."/>
        </authorList>
    </citation>
    <scope>GLYCOSYLATION AT ASN-44; ASN-286; ASN-300; ASN-383; ASN-413; ASN-525; ASN-600; ASN-618 AND ASN-691</scope>
</reference>
<reference key="7">
    <citation type="journal article" date="2009" name="J. Proteome Res.">
        <title>Glycoproteomics analysis of human liver tissue by combination of multiple enzyme digestion and hydrazide chemistry.</title>
        <authorList>
            <person name="Chen R."/>
            <person name="Jiang X."/>
            <person name="Sun D."/>
            <person name="Han G."/>
            <person name="Wang F."/>
            <person name="Ye M."/>
            <person name="Wang L."/>
            <person name="Zou H."/>
        </authorList>
    </citation>
    <scope>GLYCOSYLATION [LARGE SCALE ANALYSIS] AT ASN-286 AND ASN-300</scope>
    <source>
        <tissue>Liver</tissue>
    </source>
</reference>
<reference key="8">
    <citation type="journal article" date="2011" name="BMC Syst. Biol.">
        <title>Initial characterization of the human central proteome.</title>
        <authorList>
            <person name="Burkard T.R."/>
            <person name="Planyavsky M."/>
            <person name="Kaupe I."/>
            <person name="Breitwieser F.P."/>
            <person name="Buerckstuemmer T."/>
            <person name="Bennett K.L."/>
            <person name="Superti-Furga G."/>
            <person name="Colinge J."/>
        </authorList>
    </citation>
    <scope>IDENTIFICATION BY MASS SPECTROMETRY [LARGE SCALE ANALYSIS]</scope>
</reference>
<feature type="signal peptide" evidence="4">
    <location>
        <begin position="1"/>
        <end position="25"/>
    </location>
</feature>
<feature type="chain" id="PRO_0000014762" description="Prostaglandin F2 receptor negative regulator">
    <location>
        <begin position="26"/>
        <end position="879"/>
    </location>
</feature>
<feature type="topological domain" description="Extracellular" evidence="4">
    <location>
        <begin position="26"/>
        <end position="832"/>
    </location>
</feature>
<feature type="transmembrane region" description="Helical" evidence="4">
    <location>
        <begin position="833"/>
        <end position="853"/>
    </location>
</feature>
<feature type="topological domain" description="Cytoplasmic" evidence="4">
    <location>
        <begin position="854"/>
        <end position="879"/>
    </location>
</feature>
<feature type="domain" description="Ig-like C2-type 1">
    <location>
        <begin position="26"/>
        <end position="129"/>
    </location>
</feature>
<feature type="domain" description="Ig-like C2-type 2">
    <location>
        <begin position="149"/>
        <end position="268"/>
    </location>
</feature>
<feature type="domain" description="Ig-like C2-type 3">
    <location>
        <begin position="276"/>
        <end position="394"/>
    </location>
</feature>
<feature type="domain" description="Ig-like C2-type 4">
    <location>
        <begin position="406"/>
        <end position="536"/>
    </location>
</feature>
<feature type="domain" description="Ig-like C2-type 5">
    <location>
        <begin position="544"/>
        <end position="662"/>
    </location>
</feature>
<feature type="domain" description="Ig-like C2-type 6">
    <location>
        <begin position="688"/>
        <end position="813"/>
    </location>
</feature>
<feature type="short sequence motif" description="Endoplasmic reticulum retention signal">
    <location>
        <begin position="424"/>
        <end position="427"/>
    </location>
</feature>
<feature type="short sequence motif" description="Cell attachment site" evidence="4">
    <location>
        <begin position="703"/>
        <end position="705"/>
    </location>
</feature>
<feature type="modified residue" description="Phosphothreonine" evidence="2">
    <location>
        <position position="271"/>
    </location>
</feature>
<feature type="glycosylation site" description="N-linked (GlcNAc...) asparagine" evidence="8">
    <location>
        <position position="44"/>
    </location>
</feature>
<feature type="glycosylation site" description="N-linked (GlcNAc...) asparagine" evidence="8 9">
    <location>
        <position position="286"/>
    </location>
</feature>
<feature type="glycosylation site" description="N-linked (GlcNAc...) asparagine" evidence="8 9">
    <location>
        <position position="300"/>
    </location>
</feature>
<feature type="glycosylation site" description="N-linked (GlcNAc...) asparagine" evidence="8">
    <location>
        <position position="383"/>
    </location>
</feature>
<feature type="glycosylation site" description="N-linked (GlcNAc...) asparagine" evidence="8">
    <location>
        <position position="413"/>
    </location>
</feature>
<feature type="glycosylation site" description="N-linked (GlcNAc...) asparagine" evidence="8">
    <location>
        <position position="525"/>
    </location>
</feature>
<feature type="glycosylation site" description="N-linked (GlcNAc...) asparagine" evidence="8">
    <location>
        <position position="600"/>
    </location>
</feature>
<feature type="glycosylation site" description="N-linked (GlcNAc...) asparagine" evidence="8">
    <location>
        <position position="618"/>
    </location>
</feature>
<feature type="glycosylation site" description="N-linked (GlcNAc...) asparagine" evidence="8">
    <location>
        <position position="691"/>
    </location>
</feature>
<feature type="disulfide bond" evidence="5">
    <location>
        <begin position="43"/>
        <end position="119"/>
    </location>
</feature>
<feature type="disulfide bond" evidence="5">
    <location>
        <begin position="169"/>
        <end position="247"/>
    </location>
</feature>
<feature type="disulfide bond" evidence="5">
    <location>
        <begin position="299"/>
        <end position="373"/>
    </location>
</feature>
<feature type="disulfide bond" evidence="5">
    <location>
        <begin position="429"/>
        <end position="515"/>
    </location>
</feature>
<feature type="disulfide bond" evidence="5">
    <location>
        <begin position="571"/>
        <end position="655"/>
    </location>
</feature>
<feature type="disulfide bond" evidence="5">
    <location>
        <begin position="711"/>
        <end position="793"/>
    </location>
</feature>
<feature type="sequence variant" id="VAR_059388" description="In dbSNP:rs4546904." evidence="7">
    <original>S</original>
    <variation>T</variation>
    <location>
        <position position="277"/>
    </location>
</feature>
<feature type="sequence variant" id="VAR_024496" description="In dbSNP:rs10801922.">
    <original>V</original>
    <variation>I</variation>
    <location>
        <position position="837"/>
    </location>
</feature>
<feature type="sequence conflict" description="In Ref. 2; BAC11104." evidence="10" ref="2">
    <original>V</original>
    <variation>A</variation>
    <location>
        <position position="109"/>
    </location>
</feature>
<keyword id="KW-0903">Direct protein sequencing</keyword>
<keyword id="KW-1015">Disulfide bond</keyword>
<keyword id="KW-0256">Endoplasmic reticulum</keyword>
<keyword id="KW-0325">Glycoprotein</keyword>
<keyword id="KW-0333">Golgi apparatus</keyword>
<keyword id="KW-0393">Immunoglobulin domain</keyword>
<keyword id="KW-0472">Membrane</keyword>
<keyword id="KW-0597">Phosphoprotein</keyword>
<keyword id="KW-1267">Proteomics identification</keyword>
<keyword id="KW-1185">Reference proteome</keyword>
<keyword id="KW-0677">Repeat</keyword>
<keyword id="KW-0732">Signal</keyword>
<keyword id="KW-0812">Transmembrane</keyword>
<keyword id="KW-1133">Transmembrane helix</keyword>
<protein>
    <recommendedName>
        <fullName>Prostaglandin F2 receptor negative regulator</fullName>
    </recommendedName>
    <alternativeName>
        <fullName>CD9 partner 1</fullName>
        <shortName>CD9P-1</shortName>
    </alternativeName>
    <alternativeName>
        <fullName>Glu-Trp-Ile EWI motif-containing protein F</fullName>
        <shortName>EWI-F</shortName>
    </alternativeName>
    <alternativeName>
        <fullName>Prostaglandin F2-alpha receptor regulatory protein</fullName>
    </alternativeName>
    <alternativeName>
        <fullName>Prostaglandin F2-alpha receptor-associated protein</fullName>
    </alternativeName>
    <cdAntigenName>CD315</cdAntigenName>
</protein>